<evidence type="ECO:0000255" key="1">
    <source>
        <dbReference type="HAMAP-Rule" id="MF_00382"/>
    </source>
</evidence>
<evidence type="ECO:0000305" key="2"/>
<organism>
    <name type="scientific">Coffea arabica</name>
    <name type="common">Arabian coffee</name>
    <dbReference type="NCBI Taxonomy" id="13443"/>
    <lineage>
        <taxon>Eukaryota</taxon>
        <taxon>Viridiplantae</taxon>
        <taxon>Streptophyta</taxon>
        <taxon>Embryophyta</taxon>
        <taxon>Tracheophyta</taxon>
        <taxon>Spermatophyta</taxon>
        <taxon>Magnoliopsida</taxon>
        <taxon>eudicotyledons</taxon>
        <taxon>Gunneridae</taxon>
        <taxon>Pentapetalae</taxon>
        <taxon>asterids</taxon>
        <taxon>lamiids</taxon>
        <taxon>Gentianales</taxon>
        <taxon>Rubiaceae</taxon>
        <taxon>Ixoroideae</taxon>
        <taxon>Gardenieae complex</taxon>
        <taxon>Bertiereae - Coffeeae clade</taxon>
        <taxon>Coffeeae</taxon>
        <taxon>Coffea</taxon>
    </lineage>
</organism>
<accession>A0A358</accession>
<gene>
    <name evidence="1" type="primary">rpl20</name>
</gene>
<proteinExistence type="inferred from homology"/>
<dbReference type="EMBL" id="EF044213">
    <property type="protein sequence ID" value="ABJ89702.1"/>
    <property type="molecule type" value="Genomic_DNA"/>
</dbReference>
<dbReference type="RefSeq" id="YP_817505.1">
    <property type="nucleotide sequence ID" value="NC_008535.1"/>
</dbReference>
<dbReference type="SMR" id="A0A358"/>
<dbReference type="GeneID" id="4421752"/>
<dbReference type="OrthoDB" id="10251781at2759"/>
<dbReference type="Proteomes" id="UP000515148">
    <property type="component" value="Chloroplast Pltd"/>
</dbReference>
<dbReference type="GO" id="GO:0009507">
    <property type="term" value="C:chloroplast"/>
    <property type="evidence" value="ECO:0007669"/>
    <property type="project" value="UniProtKB-SubCell"/>
</dbReference>
<dbReference type="GO" id="GO:1990904">
    <property type="term" value="C:ribonucleoprotein complex"/>
    <property type="evidence" value="ECO:0007669"/>
    <property type="project" value="UniProtKB-KW"/>
</dbReference>
<dbReference type="GO" id="GO:0005840">
    <property type="term" value="C:ribosome"/>
    <property type="evidence" value="ECO:0007669"/>
    <property type="project" value="UniProtKB-KW"/>
</dbReference>
<dbReference type="GO" id="GO:0019843">
    <property type="term" value="F:rRNA binding"/>
    <property type="evidence" value="ECO:0007669"/>
    <property type="project" value="UniProtKB-UniRule"/>
</dbReference>
<dbReference type="GO" id="GO:0003735">
    <property type="term" value="F:structural constituent of ribosome"/>
    <property type="evidence" value="ECO:0007669"/>
    <property type="project" value="InterPro"/>
</dbReference>
<dbReference type="GO" id="GO:0000027">
    <property type="term" value="P:ribosomal large subunit assembly"/>
    <property type="evidence" value="ECO:0007669"/>
    <property type="project" value="UniProtKB-UniRule"/>
</dbReference>
<dbReference type="GO" id="GO:0006412">
    <property type="term" value="P:translation"/>
    <property type="evidence" value="ECO:0007669"/>
    <property type="project" value="InterPro"/>
</dbReference>
<dbReference type="CDD" id="cd07026">
    <property type="entry name" value="Ribosomal_L20"/>
    <property type="match status" value="1"/>
</dbReference>
<dbReference type="FunFam" id="1.10.1900.20:FF:000001">
    <property type="entry name" value="50S ribosomal protein L20"/>
    <property type="match status" value="1"/>
</dbReference>
<dbReference type="Gene3D" id="6.10.160.10">
    <property type="match status" value="1"/>
</dbReference>
<dbReference type="Gene3D" id="1.10.1900.20">
    <property type="entry name" value="Ribosomal protein L20"/>
    <property type="match status" value="1"/>
</dbReference>
<dbReference type="HAMAP" id="MF_00382">
    <property type="entry name" value="Ribosomal_bL20"/>
    <property type="match status" value="1"/>
</dbReference>
<dbReference type="InterPro" id="IPR005813">
    <property type="entry name" value="Ribosomal_bL20"/>
</dbReference>
<dbReference type="InterPro" id="IPR049946">
    <property type="entry name" value="RIBOSOMAL_L20_CS"/>
</dbReference>
<dbReference type="InterPro" id="IPR035566">
    <property type="entry name" value="Ribosomal_protein_bL20_C"/>
</dbReference>
<dbReference type="NCBIfam" id="TIGR01032">
    <property type="entry name" value="rplT_bact"/>
    <property type="match status" value="1"/>
</dbReference>
<dbReference type="PANTHER" id="PTHR10986">
    <property type="entry name" value="39S RIBOSOMAL PROTEIN L20"/>
    <property type="match status" value="1"/>
</dbReference>
<dbReference type="Pfam" id="PF00453">
    <property type="entry name" value="Ribosomal_L20"/>
    <property type="match status" value="1"/>
</dbReference>
<dbReference type="PRINTS" id="PR00062">
    <property type="entry name" value="RIBOSOMALL20"/>
</dbReference>
<dbReference type="SUPFAM" id="SSF74731">
    <property type="entry name" value="Ribosomal protein L20"/>
    <property type="match status" value="1"/>
</dbReference>
<dbReference type="PROSITE" id="PS00937">
    <property type="entry name" value="RIBOSOMAL_L20"/>
    <property type="match status" value="1"/>
</dbReference>
<reference key="1">
    <citation type="journal article" date="2007" name="Plant Biotechnol. J.">
        <title>The complete nucleotide sequence of the coffee (Coffea arabica L.) chloroplast genome: organization and implications for biotechnology and phylogenetic relationships amongst angiosperms.</title>
        <authorList>
            <person name="Samson N."/>
            <person name="Bausher M.G."/>
            <person name="Lee S.-B."/>
            <person name="Jansen R.K."/>
            <person name="Daniell H."/>
        </authorList>
    </citation>
    <scope>NUCLEOTIDE SEQUENCE [LARGE SCALE GENOMIC DNA]</scope>
</reference>
<protein>
    <recommendedName>
        <fullName evidence="1">Large ribosomal subunit protein bL20c</fullName>
    </recommendedName>
    <alternativeName>
        <fullName evidence="2">50S ribosomal protein L20, chloroplastic</fullName>
    </alternativeName>
</protein>
<comment type="function">
    <text evidence="1">Binds directly to 23S ribosomal RNA and is necessary for the in vitro assembly process of the 50S ribosomal subunit. It is not involved in the protein synthesizing functions of that subunit.</text>
</comment>
<comment type="subcellular location">
    <subcellularLocation>
        <location>Plastid</location>
        <location>Chloroplast</location>
    </subcellularLocation>
</comment>
<comment type="similarity">
    <text evidence="1">Belongs to the bacterial ribosomal protein bL20 family.</text>
</comment>
<geneLocation type="chloroplast"/>
<feature type="chain" id="PRO_0000276404" description="Large ribosomal subunit protein bL20c">
    <location>
        <begin position="1"/>
        <end position="132"/>
    </location>
</feature>
<name>RK20_COFAR</name>
<sequence length="132" mass="15967">MTRIRRGYIARRRRTKIRLFASSFRGAHSRLTRTITQQKIKALVSAHRDRDSKKRNFRRLWIIRINAIIRERVVEWALSYSYSRLIHDLYKRQLLLNRKILAQIAISNRNCLYMISNELYKYKEVEESSGII</sequence>
<keyword id="KW-0150">Chloroplast</keyword>
<keyword id="KW-0934">Plastid</keyword>
<keyword id="KW-1185">Reference proteome</keyword>
<keyword id="KW-0687">Ribonucleoprotein</keyword>
<keyword id="KW-0689">Ribosomal protein</keyword>
<keyword id="KW-0694">RNA-binding</keyword>
<keyword id="KW-0699">rRNA-binding</keyword>